<keyword id="KW-0028">Amino-acid biosynthesis</keyword>
<keyword id="KW-0055">Arginine biosynthesis</keyword>
<keyword id="KW-0963">Cytoplasm</keyword>
<keyword id="KW-0521">NADP</keyword>
<keyword id="KW-0560">Oxidoreductase</keyword>
<reference key="1">
    <citation type="submission" date="2007-06" db="EMBL/GenBank/DDBJ databases">
        <title>Complete sequence of Methanococcus vannielii SB.</title>
        <authorList>
            <consortium name="US DOE Joint Genome Institute"/>
            <person name="Copeland A."/>
            <person name="Lucas S."/>
            <person name="Lapidus A."/>
            <person name="Barry K."/>
            <person name="Glavina del Rio T."/>
            <person name="Dalin E."/>
            <person name="Tice H."/>
            <person name="Pitluck S."/>
            <person name="Chain P."/>
            <person name="Malfatti S."/>
            <person name="Shin M."/>
            <person name="Vergez L."/>
            <person name="Schmutz J."/>
            <person name="Larimer F."/>
            <person name="Land M."/>
            <person name="Hauser L."/>
            <person name="Kyrpides N."/>
            <person name="Anderson I."/>
            <person name="Sieprawska-Lupa M."/>
            <person name="Whitman W.B."/>
            <person name="Richardson P."/>
        </authorList>
    </citation>
    <scope>NUCLEOTIDE SEQUENCE [LARGE SCALE GENOMIC DNA]</scope>
    <source>
        <strain>ATCC 35089 / DSM 1224 / JCM 13029 / OCM 148 / SB</strain>
    </source>
</reference>
<sequence length="342" mass="37981">MKTVSIIGGTGYTGSELLGILANHKDVEVKNVTSRKDSGKKLTKIHPQVKNLKNYNELEFKNLNPENIDTDIVFCATPHGASLKIVPILHEMGINVIDLSGDYRFEDLEMYEAWYGLKHTGKINSVYGLPEIYREKIKKANVIANPGCYPTGAILSMAPLVSNDIVEERIIFDSKSGVSGAGVEATETTHFPNVNENLGPYKLTKHRHSPEIGKELEYLAEKSLKVSFTPHLLPVTRGILTTAHAFLKEDIGRADIVEIYEEFYKNEFFVRIYDEEMISLTGVRSSNFCDIGGFEIDRFGRIVVVSAIDNLVKGASGQAIQNMNILMGFDEKEGLNIGGLRP</sequence>
<dbReference type="EC" id="1.2.1.38" evidence="1"/>
<dbReference type="EMBL" id="CP000742">
    <property type="protein sequence ID" value="ABR55021.1"/>
    <property type="molecule type" value="Genomic_DNA"/>
</dbReference>
<dbReference type="RefSeq" id="WP_012065936.1">
    <property type="nucleotide sequence ID" value="NC_009634.1"/>
</dbReference>
<dbReference type="SMR" id="A6UR99"/>
<dbReference type="STRING" id="406327.Mevan_1121"/>
<dbReference type="GeneID" id="5326068"/>
<dbReference type="KEGG" id="mvn:Mevan_1121"/>
<dbReference type="eggNOG" id="arCOG00495">
    <property type="taxonomic scope" value="Archaea"/>
</dbReference>
<dbReference type="HOGENOM" id="CLU_006384_0_1_2"/>
<dbReference type="OrthoDB" id="372053at2157"/>
<dbReference type="UniPathway" id="UPA00068">
    <property type="reaction ID" value="UER00108"/>
</dbReference>
<dbReference type="Proteomes" id="UP000001107">
    <property type="component" value="Chromosome"/>
</dbReference>
<dbReference type="GO" id="GO:0005737">
    <property type="term" value="C:cytoplasm"/>
    <property type="evidence" value="ECO:0007669"/>
    <property type="project" value="UniProtKB-SubCell"/>
</dbReference>
<dbReference type="GO" id="GO:0003942">
    <property type="term" value="F:N-acetyl-gamma-glutamyl-phosphate reductase activity"/>
    <property type="evidence" value="ECO:0007669"/>
    <property type="project" value="UniProtKB-UniRule"/>
</dbReference>
<dbReference type="GO" id="GO:0051287">
    <property type="term" value="F:NAD binding"/>
    <property type="evidence" value="ECO:0007669"/>
    <property type="project" value="InterPro"/>
</dbReference>
<dbReference type="GO" id="GO:0070401">
    <property type="term" value="F:NADP+ binding"/>
    <property type="evidence" value="ECO:0007669"/>
    <property type="project" value="InterPro"/>
</dbReference>
<dbReference type="GO" id="GO:0006526">
    <property type="term" value="P:L-arginine biosynthetic process"/>
    <property type="evidence" value="ECO:0007669"/>
    <property type="project" value="UniProtKB-UniRule"/>
</dbReference>
<dbReference type="CDD" id="cd23934">
    <property type="entry name" value="AGPR_1_C"/>
    <property type="match status" value="1"/>
</dbReference>
<dbReference type="CDD" id="cd17895">
    <property type="entry name" value="AGPR_1_N"/>
    <property type="match status" value="1"/>
</dbReference>
<dbReference type="FunFam" id="3.30.360.10:FF:000014">
    <property type="entry name" value="N-acetyl-gamma-glutamyl-phosphate reductase"/>
    <property type="match status" value="1"/>
</dbReference>
<dbReference type="Gene3D" id="3.30.360.10">
    <property type="entry name" value="Dihydrodipicolinate Reductase, domain 2"/>
    <property type="match status" value="1"/>
</dbReference>
<dbReference type="Gene3D" id="3.40.50.720">
    <property type="entry name" value="NAD(P)-binding Rossmann-like Domain"/>
    <property type="match status" value="1"/>
</dbReference>
<dbReference type="HAMAP" id="MF_00150">
    <property type="entry name" value="ArgC_type1"/>
    <property type="match status" value="1"/>
</dbReference>
<dbReference type="InterPro" id="IPR023013">
    <property type="entry name" value="AGPR_AS"/>
</dbReference>
<dbReference type="InterPro" id="IPR000706">
    <property type="entry name" value="AGPR_type-1"/>
</dbReference>
<dbReference type="InterPro" id="IPR036291">
    <property type="entry name" value="NAD(P)-bd_dom_sf"/>
</dbReference>
<dbReference type="InterPro" id="IPR050085">
    <property type="entry name" value="NAGSA_dehydrogenase"/>
</dbReference>
<dbReference type="InterPro" id="IPR000534">
    <property type="entry name" value="Semialdehyde_DH_NAD-bd"/>
</dbReference>
<dbReference type="NCBIfam" id="TIGR01850">
    <property type="entry name" value="argC"/>
    <property type="match status" value="1"/>
</dbReference>
<dbReference type="PANTHER" id="PTHR32338:SF10">
    <property type="entry name" value="N-ACETYL-GAMMA-GLUTAMYL-PHOSPHATE REDUCTASE, CHLOROPLASTIC-RELATED"/>
    <property type="match status" value="1"/>
</dbReference>
<dbReference type="PANTHER" id="PTHR32338">
    <property type="entry name" value="N-ACETYL-GAMMA-GLUTAMYL-PHOSPHATE REDUCTASE, CHLOROPLASTIC-RELATED-RELATED"/>
    <property type="match status" value="1"/>
</dbReference>
<dbReference type="Pfam" id="PF01118">
    <property type="entry name" value="Semialdhyde_dh"/>
    <property type="match status" value="1"/>
</dbReference>
<dbReference type="Pfam" id="PF22698">
    <property type="entry name" value="Semialdhyde_dhC_1"/>
    <property type="match status" value="1"/>
</dbReference>
<dbReference type="SMART" id="SM00859">
    <property type="entry name" value="Semialdhyde_dh"/>
    <property type="match status" value="1"/>
</dbReference>
<dbReference type="SUPFAM" id="SSF55347">
    <property type="entry name" value="Glyceraldehyde-3-phosphate dehydrogenase-like, C-terminal domain"/>
    <property type="match status" value="1"/>
</dbReference>
<dbReference type="SUPFAM" id="SSF51735">
    <property type="entry name" value="NAD(P)-binding Rossmann-fold domains"/>
    <property type="match status" value="1"/>
</dbReference>
<dbReference type="PROSITE" id="PS01224">
    <property type="entry name" value="ARGC"/>
    <property type="match status" value="1"/>
</dbReference>
<gene>
    <name evidence="1" type="primary">argC</name>
    <name type="ordered locus">Mevan_1121</name>
</gene>
<protein>
    <recommendedName>
        <fullName evidence="1">N-acetyl-gamma-glutamyl-phosphate reductase</fullName>
        <shortName evidence="1">AGPR</shortName>
        <ecNumber evidence="1">1.2.1.38</ecNumber>
    </recommendedName>
    <alternativeName>
        <fullName evidence="1">N-acetyl-glutamate semialdehyde dehydrogenase</fullName>
        <shortName evidence="1">NAGSA dehydrogenase</shortName>
    </alternativeName>
</protein>
<feature type="chain" id="PRO_1000011018" description="N-acetyl-gamma-glutamyl-phosphate reductase">
    <location>
        <begin position="1"/>
        <end position="342"/>
    </location>
</feature>
<feature type="active site" evidence="1">
    <location>
        <position position="148"/>
    </location>
</feature>
<accession>A6UR99</accession>
<organism>
    <name type="scientific">Methanococcus vannielii (strain ATCC 35089 / DSM 1224 / JCM 13029 / OCM 148 / SB)</name>
    <dbReference type="NCBI Taxonomy" id="406327"/>
    <lineage>
        <taxon>Archaea</taxon>
        <taxon>Methanobacteriati</taxon>
        <taxon>Methanobacteriota</taxon>
        <taxon>Methanomada group</taxon>
        <taxon>Methanococci</taxon>
        <taxon>Methanococcales</taxon>
        <taxon>Methanococcaceae</taxon>
        <taxon>Methanococcus</taxon>
    </lineage>
</organism>
<comment type="function">
    <text evidence="1">Catalyzes the NADPH-dependent reduction of N-acetyl-5-glutamyl phosphate to yield N-acetyl-L-glutamate 5-semialdehyde.</text>
</comment>
<comment type="catalytic activity">
    <reaction evidence="1">
        <text>N-acetyl-L-glutamate 5-semialdehyde + phosphate + NADP(+) = N-acetyl-L-glutamyl 5-phosphate + NADPH + H(+)</text>
        <dbReference type="Rhea" id="RHEA:21588"/>
        <dbReference type="ChEBI" id="CHEBI:15378"/>
        <dbReference type="ChEBI" id="CHEBI:29123"/>
        <dbReference type="ChEBI" id="CHEBI:43474"/>
        <dbReference type="ChEBI" id="CHEBI:57783"/>
        <dbReference type="ChEBI" id="CHEBI:57936"/>
        <dbReference type="ChEBI" id="CHEBI:58349"/>
        <dbReference type="EC" id="1.2.1.38"/>
    </reaction>
</comment>
<comment type="pathway">
    <text evidence="1">Amino-acid biosynthesis; L-arginine biosynthesis; N(2)-acetyl-L-ornithine from L-glutamate: step 3/4.</text>
</comment>
<comment type="subcellular location">
    <subcellularLocation>
        <location evidence="1">Cytoplasm</location>
    </subcellularLocation>
</comment>
<comment type="similarity">
    <text evidence="1">Belongs to the NAGSA dehydrogenase family. Type 1 subfamily.</text>
</comment>
<name>ARGC_METVS</name>
<evidence type="ECO:0000255" key="1">
    <source>
        <dbReference type="HAMAP-Rule" id="MF_00150"/>
    </source>
</evidence>
<proteinExistence type="inferred from homology"/>